<accession>O22328</accession>
<feature type="chain" id="PRO_0000199464" description="Agamous-like MADS-box protein AGL8 homolog">
    <location>
        <begin position="1"/>
        <end position="250"/>
    </location>
</feature>
<feature type="domain" description="MADS-box" evidence="1">
    <location>
        <begin position="3"/>
        <end position="57"/>
    </location>
</feature>
<feature type="domain" description="K-box" evidence="2">
    <location>
        <begin position="88"/>
        <end position="178"/>
    </location>
</feature>
<feature type="region of interest" description="Disordered" evidence="3">
    <location>
        <begin position="162"/>
        <end position="191"/>
    </location>
</feature>
<feature type="region of interest" description="Disordered" evidence="3">
    <location>
        <begin position="206"/>
        <end position="241"/>
    </location>
</feature>
<feature type="compositionally biased region" description="Basic and acidic residues" evidence="3">
    <location>
        <begin position="171"/>
        <end position="180"/>
    </location>
</feature>
<feature type="compositionally biased region" description="Polar residues" evidence="3">
    <location>
        <begin position="181"/>
        <end position="191"/>
    </location>
</feature>
<feature type="compositionally biased region" description="Polar residues" evidence="3">
    <location>
        <begin position="226"/>
        <end position="240"/>
    </location>
</feature>
<reference key="1">
    <citation type="submission" date="1997-05" db="EMBL/GenBank/DDBJ databases">
        <authorList>
            <person name="Seppanen M.M."/>
        </authorList>
    </citation>
    <scope>NUCLEOTIDE SEQUENCE [MRNA]</scope>
</reference>
<sequence length="250" mass="28743">MGRGRVQLKRIENKINRQVTFSKRRSGLLKKAHEISVLCDAEVGLIVFSTKGKLFEYATDSCMERLLERYERYSFAEKQLVPTDHTSPGSWTLENAKLKARLEVLQRNEKLYVGEDLESLNMKELQNLEHQLASALKHIRSRKNQLMHESISVLQKQDRALQEQNNQLSKKVKEREKEVEQQNQWDQQNHEINSSTFVLPQQLDSPHLGEASQNTNVVDNGEVEGGNSSQXQGAANNTVMPQWMVRHLNG</sequence>
<organism>
    <name type="scientific">Solanum commersonii</name>
    <name type="common">Commerson's wild potato</name>
    <name type="synonym">Commerson's nightshade</name>
    <dbReference type="NCBI Taxonomy" id="4109"/>
    <lineage>
        <taxon>Eukaryota</taxon>
        <taxon>Viridiplantae</taxon>
        <taxon>Streptophyta</taxon>
        <taxon>Embryophyta</taxon>
        <taxon>Tracheophyta</taxon>
        <taxon>Spermatophyta</taxon>
        <taxon>Magnoliopsida</taxon>
        <taxon>eudicotyledons</taxon>
        <taxon>Gunneridae</taxon>
        <taxon>Pentapetalae</taxon>
        <taxon>asterids</taxon>
        <taxon>lamiids</taxon>
        <taxon>Solanales</taxon>
        <taxon>Solanaceae</taxon>
        <taxon>Solanoideae</taxon>
        <taxon>Solaneae</taxon>
        <taxon>Solanum</taxon>
    </lineage>
</organism>
<dbReference type="EMBL" id="AF002666">
    <property type="protein sequence ID" value="AAB65161.1"/>
    <property type="molecule type" value="mRNA"/>
</dbReference>
<dbReference type="PIR" id="T07902">
    <property type="entry name" value="T07902"/>
</dbReference>
<dbReference type="GO" id="GO:0005634">
    <property type="term" value="C:nucleus"/>
    <property type="evidence" value="ECO:0007669"/>
    <property type="project" value="UniProtKB-SubCell"/>
</dbReference>
<dbReference type="GO" id="GO:0003700">
    <property type="term" value="F:DNA-binding transcription factor activity"/>
    <property type="evidence" value="ECO:0007669"/>
    <property type="project" value="InterPro"/>
</dbReference>
<dbReference type="GO" id="GO:0046983">
    <property type="term" value="F:protein dimerization activity"/>
    <property type="evidence" value="ECO:0007669"/>
    <property type="project" value="InterPro"/>
</dbReference>
<dbReference type="GO" id="GO:0000977">
    <property type="term" value="F:RNA polymerase II transcription regulatory region sequence-specific DNA binding"/>
    <property type="evidence" value="ECO:0007669"/>
    <property type="project" value="InterPro"/>
</dbReference>
<dbReference type="GO" id="GO:0045944">
    <property type="term" value="P:positive regulation of transcription by RNA polymerase II"/>
    <property type="evidence" value="ECO:0007669"/>
    <property type="project" value="InterPro"/>
</dbReference>
<dbReference type="CDD" id="cd00265">
    <property type="entry name" value="MADS_MEF2_like"/>
    <property type="match status" value="1"/>
</dbReference>
<dbReference type="FunFam" id="3.40.1810.10:FF:000003">
    <property type="entry name" value="MADS-box transcription factor MADS-MC"/>
    <property type="match status" value="1"/>
</dbReference>
<dbReference type="Gene3D" id="3.40.1810.10">
    <property type="entry name" value="Transcription factor, MADS-box"/>
    <property type="match status" value="1"/>
</dbReference>
<dbReference type="InterPro" id="IPR050142">
    <property type="entry name" value="MADS-box/MEF2_TF"/>
</dbReference>
<dbReference type="InterPro" id="IPR033896">
    <property type="entry name" value="MEF2-like_N"/>
</dbReference>
<dbReference type="InterPro" id="IPR002487">
    <property type="entry name" value="TF_Kbox"/>
</dbReference>
<dbReference type="InterPro" id="IPR002100">
    <property type="entry name" value="TF_MADSbox"/>
</dbReference>
<dbReference type="InterPro" id="IPR036879">
    <property type="entry name" value="TF_MADSbox_sf"/>
</dbReference>
<dbReference type="PANTHER" id="PTHR48019">
    <property type="entry name" value="SERUM RESPONSE FACTOR HOMOLOG"/>
    <property type="match status" value="1"/>
</dbReference>
<dbReference type="Pfam" id="PF01486">
    <property type="entry name" value="K-box"/>
    <property type="match status" value="1"/>
</dbReference>
<dbReference type="Pfam" id="PF00319">
    <property type="entry name" value="SRF-TF"/>
    <property type="match status" value="1"/>
</dbReference>
<dbReference type="PRINTS" id="PR00404">
    <property type="entry name" value="MADSDOMAIN"/>
</dbReference>
<dbReference type="SMART" id="SM00432">
    <property type="entry name" value="MADS"/>
    <property type="match status" value="1"/>
</dbReference>
<dbReference type="SUPFAM" id="SSF55455">
    <property type="entry name" value="SRF-like"/>
    <property type="match status" value="1"/>
</dbReference>
<dbReference type="PROSITE" id="PS51297">
    <property type="entry name" value="K_BOX"/>
    <property type="match status" value="1"/>
</dbReference>
<dbReference type="PROSITE" id="PS00350">
    <property type="entry name" value="MADS_BOX_1"/>
    <property type="match status" value="1"/>
</dbReference>
<dbReference type="PROSITE" id="PS50066">
    <property type="entry name" value="MADS_BOX_2"/>
    <property type="match status" value="1"/>
</dbReference>
<keyword id="KW-0238">DNA-binding</keyword>
<keyword id="KW-0539">Nucleus</keyword>
<keyword id="KW-0804">Transcription</keyword>
<keyword id="KW-0805">Transcription regulation</keyword>
<evidence type="ECO:0000255" key="1">
    <source>
        <dbReference type="PROSITE-ProRule" id="PRU00251"/>
    </source>
</evidence>
<evidence type="ECO:0000255" key="2">
    <source>
        <dbReference type="PROSITE-ProRule" id="PRU00629"/>
    </source>
</evidence>
<evidence type="ECO:0000256" key="3">
    <source>
        <dbReference type="SAM" id="MobiDB-lite"/>
    </source>
</evidence>
<name>AGL8_SOLCO</name>
<proteinExistence type="evidence at transcript level"/>
<protein>
    <recommendedName>
        <fullName>Agamous-like MADS-box protein AGL8 homolog</fullName>
    </recommendedName>
</protein>
<comment type="function">
    <text>Probable transcription factor.</text>
</comment>
<comment type="subcellular location">
    <subcellularLocation>
        <location evidence="1">Nucleus</location>
    </subcellularLocation>
</comment>
<gene>
    <name type="primary">SCM1</name>
</gene>